<organism>
    <name type="scientific">Methanoculleus marisnigri (strain ATCC 35101 / DSM 1498 / JR1)</name>
    <dbReference type="NCBI Taxonomy" id="368407"/>
    <lineage>
        <taxon>Archaea</taxon>
        <taxon>Methanobacteriati</taxon>
        <taxon>Methanobacteriota</taxon>
        <taxon>Stenosarchaea group</taxon>
        <taxon>Methanomicrobia</taxon>
        <taxon>Methanomicrobiales</taxon>
        <taxon>Methanomicrobiaceae</taxon>
        <taxon>Methanoculleus</taxon>
    </lineage>
</organism>
<accession>A3CS72</accession>
<feature type="chain" id="PRO_1000059380" description="A-type ATP synthase subunit B">
    <location>
        <begin position="1"/>
        <end position="461"/>
    </location>
</feature>
<evidence type="ECO:0000255" key="1">
    <source>
        <dbReference type="HAMAP-Rule" id="MF_00310"/>
    </source>
</evidence>
<sequence>MKEYRTVAQIAGPLVFVEKTEPVGYSELVNIVTADGTVKRGQVLDTSDEIVVVQVFETTAGIGRDSGIRFTGETIKMPVGKDMLGRILSGGGKPIDGGPDIVPEKRLEITGAAINPYARSSPEDFIQTGISTIDGTNTLVRGQKLPIFSASGLPHNDVALQIARQAKVPGSTEEFAVVFAAMGITREEANYFMADFEKTGALERSVVFLNLADDPAVERTITPRLALTTAEYLAFDLGYHVLVILTDMTNYCEALRQIGAAREEVPGRRGYPGYMYTDLASIYERAGIIKGVKGSVTQIPILTMPGDDITHPIPDLTGYITEGQIVVNRELHRKGIYPPINVLPSLSRLMNLGIGEGHTREDHKKVSDQLYAAYAEGNDLRGLVAIVGKDALSERDRMFLEFADLFEDRFVRQGLYEDRSIEETLDLGWELLSTLPEEQLVRIDRELIQKYHPKYRKKAQG</sequence>
<proteinExistence type="inferred from homology"/>
<reference key="1">
    <citation type="journal article" date="2009" name="Stand. Genomic Sci.">
        <title>Complete genome sequence of Methanoculleus marisnigri Romesser et al. 1981 type strain JR1.</title>
        <authorList>
            <person name="Anderson I.J."/>
            <person name="Sieprawska-Lupa M."/>
            <person name="Lapidus A."/>
            <person name="Nolan M."/>
            <person name="Copeland A."/>
            <person name="Glavina Del Rio T."/>
            <person name="Tice H."/>
            <person name="Dalin E."/>
            <person name="Barry K."/>
            <person name="Saunders E."/>
            <person name="Han C."/>
            <person name="Brettin T."/>
            <person name="Detter J.C."/>
            <person name="Bruce D."/>
            <person name="Mikhailova N."/>
            <person name="Pitluck S."/>
            <person name="Hauser L."/>
            <person name="Land M."/>
            <person name="Lucas S."/>
            <person name="Richardson P."/>
            <person name="Whitman W.B."/>
            <person name="Kyrpides N.C."/>
        </authorList>
    </citation>
    <scope>NUCLEOTIDE SEQUENCE [LARGE SCALE GENOMIC DNA]</scope>
    <source>
        <strain>ATCC 35101 / DSM 1498 / JR1</strain>
    </source>
</reference>
<protein>
    <recommendedName>
        <fullName evidence="1">A-type ATP synthase subunit B</fullName>
    </recommendedName>
</protein>
<comment type="function">
    <text evidence="1">Component of the A-type ATP synthase that produces ATP from ADP in the presence of a proton gradient across the membrane. The B chain is a regulatory subunit.</text>
</comment>
<comment type="subunit">
    <text evidence="1">Has multiple subunits with at least A(3), B(3), C, D, E, F, H, I and proteolipid K(x).</text>
</comment>
<comment type="subcellular location">
    <subcellularLocation>
        <location evidence="1">Cell membrane</location>
        <topology evidence="1">Peripheral membrane protein</topology>
    </subcellularLocation>
</comment>
<comment type="similarity">
    <text evidence="1">Belongs to the ATPase alpha/beta chains family.</text>
</comment>
<name>AATB_METMJ</name>
<keyword id="KW-0066">ATP synthesis</keyword>
<keyword id="KW-1003">Cell membrane</keyword>
<keyword id="KW-0375">Hydrogen ion transport</keyword>
<keyword id="KW-0406">Ion transport</keyword>
<keyword id="KW-0472">Membrane</keyword>
<keyword id="KW-0813">Transport</keyword>
<gene>
    <name evidence="1" type="primary">atpB</name>
    <name type="ordered locus">Memar_0288</name>
</gene>
<dbReference type="EMBL" id="CP000562">
    <property type="protein sequence ID" value="ABN56222.1"/>
    <property type="molecule type" value="Genomic_DNA"/>
</dbReference>
<dbReference type="RefSeq" id="WP_011843143.1">
    <property type="nucleotide sequence ID" value="NC_009051.1"/>
</dbReference>
<dbReference type="SMR" id="A3CS72"/>
<dbReference type="STRING" id="368407.Memar_0288"/>
<dbReference type="GeneID" id="4847165"/>
<dbReference type="KEGG" id="mem:Memar_0288"/>
<dbReference type="eggNOG" id="arCOG00865">
    <property type="taxonomic scope" value="Archaea"/>
</dbReference>
<dbReference type="HOGENOM" id="CLU_022916_0_0_2"/>
<dbReference type="OrthoDB" id="32941at2157"/>
<dbReference type="Proteomes" id="UP000002146">
    <property type="component" value="Chromosome"/>
</dbReference>
<dbReference type="GO" id="GO:0005886">
    <property type="term" value="C:plasma membrane"/>
    <property type="evidence" value="ECO:0007669"/>
    <property type="project" value="UniProtKB-SubCell"/>
</dbReference>
<dbReference type="GO" id="GO:0033178">
    <property type="term" value="C:proton-transporting two-sector ATPase complex, catalytic domain"/>
    <property type="evidence" value="ECO:0007669"/>
    <property type="project" value="InterPro"/>
</dbReference>
<dbReference type="GO" id="GO:0005524">
    <property type="term" value="F:ATP binding"/>
    <property type="evidence" value="ECO:0007669"/>
    <property type="project" value="UniProtKB-UniRule"/>
</dbReference>
<dbReference type="GO" id="GO:0046933">
    <property type="term" value="F:proton-transporting ATP synthase activity, rotational mechanism"/>
    <property type="evidence" value="ECO:0007669"/>
    <property type="project" value="UniProtKB-UniRule"/>
</dbReference>
<dbReference type="GO" id="GO:0042777">
    <property type="term" value="P:proton motive force-driven plasma membrane ATP synthesis"/>
    <property type="evidence" value="ECO:0007669"/>
    <property type="project" value="UniProtKB-UniRule"/>
</dbReference>
<dbReference type="CDD" id="cd18112">
    <property type="entry name" value="ATP-synt_V_A-type_beta_C"/>
    <property type="match status" value="1"/>
</dbReference>
<dbReference type="CDD" id="cd18118">
    <property type="entry name" value="ATP-synt_V_A-type_beta_N"/>
    <property type="match status" value="1"/>
</dbReference>
<dbReference type="CDD" id="cd01135">
    <property type="entry name" value="V_A-ATPase_B"/>
    <property type="match status" value="1"/>
</dbReference>
<dbReference type="Gene3D" id="3.40.50.12240">
    <property type="match status" value="1"/>
</dbReference>
<dbReference type="HAMAP" id="MF_00310">
    <property type="entry name" value="ATP_synth_B_arch"/>
    <property type="match status" value="1"/>
</dbReference>
<dbReference type="InterPro" id="IPR055190">
    <property type="entry name" value="ATP-synt_VA_C"/>
</dbReference>
<dbReference type="InterPro" id="IPR020003">
    <property type="entry name" value="ATPase_a/bsu_AS"/>
</dbReference>
<dbReference type="InterPro" id="IPR005724">
    <property type="entry name" value="ATPase_A1-cplx_bsu"/>
</dbReference>
<dbReference type="InterPro" id="IPR004100">
    <property type="entry name" value="ATPase_F1/V1/A1_a/bsu_N"/>
</dbReference>
<dbReference type="InterPro" id="IPR000194">
    <property type="entry name" value="ATPase_F1/V1/A1_a/bsu_nucl-bd"/>
</dbReference>
<dbReference type="InterPro" id="IPR027417">
    <property type="entry name" value="P-loop_NTPase"/>
</dbReference>
<dbReference type="InterPro" id="IPR022879">
    <property type="entry name" value="V-ATPase_su_B/beta"/>
</dbReference>
<dbReference type="NCBIfam" id="TIGR01041">
    <property type="entry name" value="ATP_syn_B_arch"/>
    <property type="match status" value="1"/>
</dbReference>
<dbReference type="NCBIfam" id="NF003235">
    <property type="entry name" value="PRK04196.1"/>
    <property type="match status" value="1"/>
</dbReference>
<dbReference type="PANTHER" id="PTHR43389">
    <property type="entry name" value="V-TYPE PROTON ATPASE SUBUNIT B"/>
    <property type="match status" value="1"/>
</dbReference>
<dbReference type="PANTHER" id="PTHR43389:SF4">
    <property type="entry name" value="V-TYPE PROTON ATPASE SUBUNIT B"/>
    <property type="match status" value="1"/>
</dbReference>
<dbReference type="Pfam" id="PF00006">
    <property type="entry name" value="ATP-synt_ab"/>
    <property type="match status" value="1"/>
</dbReference>
<dbReference type="Pfam" id="PF02874">
    <property type="entry name" value="ATP-synt_ab_N"/>
    <property type="match status" value="1"/>
</dbReference>
<dbReference type="Pfam" id="PF22919">
    <property type="entry name" value="ATP-synt_VA_C"/>
    <property type="match status" value="1"/>
</dbReference>
<dbReference type="PIRSF" id="PIRSF039114">
    <property type="entry name" value="V-ATPsynth_beta/V-ATPase_B"/>
    <property type="match status" value="1"/>
</dbReference>
<dbReference type="SUPFAM" id="SSF47917">
    <property type="entry name" value="C-terminal domain of alpha and beta subunits of F1 ATP synthase"/>
    <property type="match status" value="1"/>
</dbReference>
<dbReference type="SUPFAM" id="SSF52540">
    <property type="entry name" value="P-loop containing nucleoside triphosphate hydrolases"/>
    <property type="match status" value="1"/>
</dbReference>
<dbReference type="PROSITE" id="PS00152">
    <property type="entry name" value="ATPASE_ALPHA_BETA"/>
    <property type="match status" value="1"/>
</dbReference>